<organism>
    <name type="scientific">Shewanella baltica (strain OS185)</name>
    <dbReference type="NCBI Taxonomy" id="402882"/>
    <lineage>
        <taxon>Bacteria</taxon>
        <taxon>Pseudomonadati</taxon>
        <taxon>Pseudomonadota</taxon>
        <taxon>Gammaproteobacteria</taxon>
        <taxon>Alteromonadales</taxon>
        <taxon>Shewanellaceae</taxon>
        <taxon>Shewanella</taxon>
    </lineage>
</organism>
<feature type="chain" id="PRO_1000053778" description="Uracil phosphoribosyltransferase">
    <location>
        <begin position="1"/>
        <end position="208"/>
    </location>
</feature>
<feature type="binding site" evidence="1">
    <location>
        <position position="78"/>
    </location>
    <ligand>
        <name>5-phospho-alpha-D-ribose 1-diphosphate</name>
        <dbReference type="ChEBI" id="CHEBI:58017"/>
    </ligand>
</feature>
<feature type="binding site" evidence="1">
    <location>
        <position position="103"/>
    </location>
    <ligand>
        <name>5-phospho-alpha-D-ribose 1-diphosphate</name>
        <dbReference type="ChEBI" id="CHEBI:58017"/>
    </ligand>
</feature>
<feature type="binding site" evidence="1">
    <location>
        <begin position="130"/>
        <end position="138"/>
    </location>
    <ligand>
        <name>5-phospho-alpha-D-ribose 1-diphosphate</name>
        <dbReference type="ChEBI" id="CHEBI:58017"/>
    </ligand>
</feature>
<feature type="binding site" evidence="1">
    <location>
        <position position="193"/>
    </location>
    <ligand>
        <name>uracil</name>
        <dbReference type="ChEBI" id="CHEBI:17568"/>
    </ligand>
</feature>
<feature type="binding site" evidence="1">
    <location>
        <begin position="198"/>
        <end position="200"/>
    </location>
    <ligand>
        <name>uracil</name>
        <dbReference type="ChEBI" id="CHEBI:17568"/>
    </ligand>
</feature>
<feature type="binding site" evidence="1">
    <location>
        <position position="199"/>
    </location>
    <ligand>
        <name>5-phospho-alpha-D-ribose 1-diphosphate</name>
        <dbReference type="ChEBI" id="CHEBI:58017"/>
    </ligand>
</feature>
<accession>A6WM35</accession>
<comment type="function">
    <text evidence="1">Catalyzes the conversion of uracil and 5-phospho-alpha-D-ribose 1-diphosphate (PRPP) to UMP and diphosphate.</text>
</comment>
<comment type="catalytic activity">
    <reaction evidence="1">
        <text>UMP + diphosphate = 5-phospho-alpha-D-ribose 1-diphosphate + uracil</text>
        <dbReference type="Rhea" id="RHEA:13017"/>
        <dbReference type="ChEBI" id="CHEBI:17568"/>
        <dbReference type="ChEBI" id="CHEBI:33019"/>
        <dbReference type="ChEBI" id="CHEBI:57865"/>
        <dbReference type="ChEBI" id="CHEBI:58017"/>
        <dbReference type="EC" id="2.4.2.9"/>
    </reaction>
</comment>
<comment type="cofactor">
    <cofactor evidence="1">
        <name>Mg(2+)</name>
        <dbReference type="ChEBI" id="CHEBI:18420"/>
    </cofactor>
    <text evidence="1">Binds 1 Mg(2+) ion per subunit. The magnesium is bound as Mg-PRPP.</text>
</comment>
<comment type="activity regulation">
    <text evidence="1">Allosterically activated by GTP.</text>
</comment>
<comment type="pathway">
    <text evidence="1">Pyrimidine metabolism; UMP biosynthesis via salvage pathway; UMP from uracil: step 1/1.</text>
</comment>
<comment type="similarity">
    <text evidence="1">Belongs to the UPRTase family.</text>
</comment>
<reference key="1">
    <citation type="submission" date="2007-07" db="EMBL/GenBank/DDBJ databases">
        <title>Complete sequence of chromosome of Shewanella baltica OS185.</title>
        <authorList>
            <consortium name="US DOE Joint Genome Institute"/>
            <person name="Copeland A."/>
            <person name="Lucas S."/>
            <person name="Lapidus A."/>
            <person name="Barry K."/>
            <person name="Glavina del Rio T."/>
            <person name="Dalin E."/>
            <person name="Tice H."/>
            <person name="Pitluck S."/>
            <person name="Sims D."/>
            <person name="Brettin T."/>
            <person name="Bruce D."/>
            <person name="Detter J.C."/>
            <person name="Han C."/>
            <person name="Schmutz J."/>
            <person name="Larimer F."/>
            <person name="Land M."/>
            <person name="Hauser L."/>
            <person name="Kyrpides N."/>
            <person name="Mikhailova N."/>
            <person name="Brettar I."/>
            <person name="Rodrigues J."/>
            <person name="Konstantinidis K."/>
            <person name="Tiedje J."/>
            <person name="Richardson P."/>
        </authorList>
    </citation>
    <scope>NUCLEOTIDE SEQUENCE [LARGE SCALE GENOMIC DNA]</scope>
    <source>
        <strain>OS185</strain>
    </source>
</reference>
<evidence type="ECO:0000255" key="1">
    <source>
        <dbReference type="HAMAP-Rule" id="MF_01218"/>
    </source>
</evidence>
<sequence length="208" mass="22542">MKVVEVKHPLVRHKIGLMREGDISTKRFRELAAEVGSLLTYEATADFETETVTIEGWNGPVEVDQIKGKKVTVVPILRAGLGMMDGVLEHIPSARISVVGIYRDEETLEPVPYFEKLASDMNERIALVVDPMLATGGSMIATVDLLKKRGCTSIKALVLVAAPEGIKALEAAHPDIELYTAAIDKCLNEKGYILPGLGDAGDKIFGTK</sequence>
<name>UPP_SHEB8</name>
<dbReference type="EC" id="2.4.2.9" evidence="1"/>
<dbReference type="EMBL" id="CP000753">
    <property type="protein sequence ID" value="ABS07874.1"/>
    <property type="molecule type" value="Genomic_DNA"/>
</dbReference>
<dbReference type="RefSeq" id="WP_006081245.1">
    <property type="nucleotide sequence ID" value="NC_009665.1"/>
</dbReference>
<dbReference type="SMR" id="A6WM35"/>
<dbReference type="GeneID" id="11771991"/>
<dbReference type="KEGG" id="sbm:Shew185_1731"/>
<dbReference type="HOGENOM" id="CLU_067096_2_2_6"/>
<dbReference type="UniPathway" id="UPA00574">
    <property type="reaction ID" value="UER00636"/>
</dbReference>
<dbReference type="GO" id="GO:0005525">
    <property type="term" value="F:GTP binding"/>
    <property type="evidence" value="ECO:0007669"/>
    <property type="project" value="UniProtKB-KW"/>
</dbReference>
<dbReference type="GO" id="GO:0000287">
    <property type="term" value="F:magnesium ion binding"/>
    <property type="evidence" value="ECO:0007669"/>
    <property type="project" value="UniProtKB-UniRule"/>
</dbReference>
<dbReference type="GO" id="GO:0004845">
    <property type="term" value="F:uracil phosphoribosyltransferase activity"/>
    <property type="evidence" value="ECO:0007669"/>
    <property type="project" value="UniProtKB-UniRule"/>
</dbReference>
<dbReference type="GO" id="GO:0044206">
    <property type="term" value="P:UMP salvage"/>
    <property type="evidence" value="ECO:0007669"/>
    <property type="project" value="UniProtKB-UniRule"/>
</dbReference>
<dbReference type="GO" id="GO:0006223">
    <property type="term" value="P:uracil salvage"/>
    <property type="evidence" value="ECO:0007669"/>
    <property type="project" value="InterPro"/>
</dbReference>
<dbReference type="CDD" id="cd06223">
    <property type="entry name" value="PRTases_typeI"/>
    <property type="match status" value="1"/>
</dbReference>
<dbReference type="FunFam" id="3.40.50.2020:FF:000003">
    <property type="entry name" value="Uracil phosphoribosyltransferase"/>
    <property type="match status" value="1"/>
</dbReference>
<dbReference type="Gene3D" id="3.40.50.2020">
    <property type="match status" value="1"/>
</dbReference>
<dbReference type="HAMAP" id="MF_01218_B">
    <property type="entry name" value="Upp_B"/>
    <property type="match status" value="1"/>
</dbReference>
<dbReference type="InterPro" id="IPR000836">
    <property type="entry name" value="PRibTrfase_dom"/>
</dbReference>
<dbReference type="InterPro" id="IPR029057">
    <property type="entry name" value="PRTase-like"/>
</dbReference>
<dbReference type="InterPro" id="IPR034332">
    <property type="entry name" value="Upp_B"/>
</dbReference>
<dbReference type="InterPro" id="IPR050054">
    <property type="entry name" value="UPRTase/APRTase"/>
</dbReference>
<dbReference type="InterPro" id="IPR005765">
    <property type="entry name" value="Ura_phspho_trans"/>
</dbReference>
<dbReference type="NCBIfam" id="NF001097">
    <property type="entry name" value="PRK00129.1"/>
    <property type="match status" value="1"/>
</dbReference>
<dbReference type="NCBIfam" id="TIGR01091">
    <property type="entry name" value="upp"/>
    <property type="match status" value="1"/>
</dbReference>
<dbReference type="PANTHER" id="PTHR32315">
    <property type="entry name" value="ADENINE PHOSPHORIBOSYLTRANSFERASE"/>
    <property type="match status" value="1"/>
</dbReference>
<dbReference type="PANTHER" id="PTHR32315:SF4">
    <property type="entry name" value="URACIL PHOSPHORIBOSYLTRANSFERASE, CHLOROPLASTIC"/>
    <property type="match status" value="1"/>
</dbReference>
<dbReference type="Pfam" id="PF14681">
    <property type="entry name" value="UPRTase"/>
    <property type="match status" value="1"/>
</dbReference>
<dbReference type="SUPFAM" id="SSF53271">
    <property type="entry name" value="PRTase-like"/>
    <property type="match status" value="1"/>
</dbReference>
<protein>
    <recommendedName>
        <fullName evidence="1">Uracil phosphoribosyltransferase</fullName>
        <ecNumber evidence="1">2.4.2.9</ecNumber>
    </recommendedName>
    <alternativeName>
        <fullName evidence="1">UMP pyrophosphorylase</fullName>
    </alternativeName>
    <alternativeName>
        <fullName evidence="1">UPRTase</fullName>
    </alternativeName>
</protein>
<keyword id="KW-0021">Allosteric enzyme</keyword>
<keyword id="KW-0328">Glycosyltransferase</keyword>
<keyword id="KW-0342">GTP-binding</keyword>
<keyword id="KW-0460">Magnesium</keyword>
<keyword id="KW-0547">Nucleotide-binding</keyword>
<keyword id="KW-0808">Transferase</keyword>
<proteinExistence type="inferred from homology"/>
<gene>
    <name evidence="1" type="primary">upp</name>
    <name type="ordered locus">Shew185_1731</name>
</gene>